<name>Y5501_KLEP3</name>
<dbReference type="EMBL" id="CP000964">
    <property type="protein sequence ID" value="ACI11431.1"/>
    <property type="molecule type" value="Genomic_DNA"/>
</dbReference>
<dbReference type="KEGG" id="kpe:KPK_5501"/>
<dbReference type="HOGENOM" id="CLU_032288_0_0_6"/>
<dbReference type="BioCyc" id="KPNE507522:GI0B-5474-MONOMER"/>
<dbReference type="Proteomes" id="UP000001734">
    <property type="component" value="Chromosome"/>
</dbReference>
<dbReference type="GO" id="GO:0005886">
    <property type="term" value="C:plasma membrane"/>
    <property type="evidence" value="ECO:0007669"/>
    <property type="project" value="UniProtKB-SubCell"/>
</dbReference>
<dbReference type="HAMAP" id="MF_00672">
    <property type="entry name" value="UPF0761"/>
    <property type="match status" value="1"/>
</dbReference>
<dbReference type="InterPro" id="IPR023679">
    <property type="entry name" value="UPF0761_bac"/>
</dbReference>
<dbReference type="InterPro" id="IPR017039">
    <property type="entry name" value="Virul_fac_BrkB"/>
</dbReference>
<dbReference type="NCBIfam" id="NF002457">
    <property type="entry name" value="PRK01637.1"/>
    <property type="match status" value="1"/>
</dbReference>
<dbReference type="NCBIfam" id="TIGR00765">
    <property type="entry name" value="yihY_not_rbn"/>
    <property type="match status" value="1"/>
</dbReference>
<dbReference type="PANTHER" id="PTHR30213">
    <property type="entry name" value="INNER MEMBRANE PROTEIN YHJD"/>
    <property type="match status" value="1"/>
</dbReference>
<dbReference type="PANTHER" id="PTHR30213:SF0">
    <property type="entry name" value="UPF0761 MEMBRANE PROTEIN YIHY"/>
    <property type="match status" value="1"/>
</dbReference>
<dbReference type="Pfam" id="PF03631">
    <property type="entry name" value="Virul_fac_BrkB"/>
    <property type="match status" value="1"/>
</dbReference>
<dbReference type="PIRSF" id="PIRSF035875">
    <property type="entry name" value="RNase_BN"/>
    <property type="match status" value="1"/>
</dbReference>
<feature type="chain" id="PRO_1000131556" description="UPF0761 membrane protein KPK_5501">
    <location>
        <begin position="1"/>
        <end position="286"/>
    </location>
</feature>
<feature type="transmembrane region" description="Helical" evidence="1">
    <location>
        <begin position="44"/>
        <end position="64"/>
    </location>
</feature>
<feature type="transmembrane region" description="Helical" evidence="1">
    <location>
        <begin position="74"/>
        <end position="94"/>
    </location>
</feature>
<feature type="transmembrane region" description="Helical" evidence="1">
    <location>
        <begin position="104"/>
        <end position="124"/>
    </location>
</feature>
<feature type="transmembrane region" description="Helical" evidence="1">
    <location>
        <begin position="140"/>
        <end position="160"/>
    </location>
</feature>
<feature type="transmembrane region" description="Helical" evidence="1">
    <location>
        <begin position="183"/>
        <end position="203"/>
    </location>
</feature>
<feature type="transmembrane region" description="Helical" evidence="1">
    <location>
        <begin position="210"/>
        <end position="230"/>
    </location>
</feature>
<feature type="transmembrane region" description="Helical" evidence="1">
    <location>
        <begin position="244"/>
        <end position="264"/>
    </location>
</feature>
<evidence type="ECO:0000255" key="1">
    <source>
        <dbReference type="HAMAP-Rule" id="MF_00672"/>
    </source>
</evidence>
<protein>
    <recommendedName>
        <fullName evidence="1">UPF0761 membrane protein KPK_5501</fullName>
    </recommendedName>
</protein>
<reference key="1">
    <citation type="journal article" date="2008" name="PLoS Genet.">
        <title>Complete genome sequence of the N2-fixing broad host range endophyte Klebsiella pneumoniae 342 and virulence predictions verified in mice.</title>
        <authorList>
            <person name="Fouts D.E."/>
            <person name="Tyler H.L."/>
            <person name="DeBoy R.T."/>
            <person name="Daugherty S."/>
            <person name="Ren Q."/>
            <person name="Badger J.H."/>
            <person name="Durkin A.S."/>
            <person name="Huot H."/>
            <person name="Shrivastava S."/>
            <person name="Kothari S."/>
            <person name="Dodson R.J."/>
            <person name="Mohamoud Y."/>
            <person name="Khouri H."/>
            <person name="Roesch L.F.W."/>
            <person name="Krogfelt K.A."/>
            <person name="Struve C."/>
            <person name="Triplett E.W."/>
            <person name="Methe B.A."/>
        </authorList>
    </citation>
    <scope>NUCLEOTIDE SEQUENCE [LARGE SCALE GENOMIC DNA]</scope>
    <source>
        <strain>342</strain>
    </source>
</reference>
<proteinExistence type="inferred from homology"/>
<keyword id="KW-0997">Cell inner membrane</keyword>
<keyword id="KW-1003">Cell membrane</keyword>
<keyword id="KW-0472">Membrane</keyword>
<keyword id="KW-0812">Transmembrane</keyword>
<keyword id="KW-1133">Transmembrane helix</keyword>
<comment type="subcellular location">
    <subcellularLocation>
        <location evidence="1">Cell inner membrane</location>
        <topology evidence="1">Multi-pass membrane protein</topology>
    </subcellularLocation>
</comment>
<comment type="similarity">
    <text evidence="1">Belongs to the UPF0761 family.</text>
</comment>
<gene>
    <name type="ordered locus">KPK_5501</name>
</gene>
<organism>
    <name type="scientific">Klebsiella pneumoniae (strain 342)</name>
    <dbReference type="NCBI Taxonomy" id="507522"/>
    <lineage>
        <taxon>Bacteria</taxon>
        <taxon>Pseudomonadati</taxon>
        <taxon>Pseudomonadota</taxon>
        <taxon>Gammaproteobacteria</taxon>
        <taxon>Enterobacterales</taxon>
        <taxon>Enterobacteriaceae</taxon>
        <taxon>Klebsiella/Raoultella group</taxon>
        <taxon>Klebsiella</taxon>
        <taxon>Klebsiella pneumoniae complex</taxon>
    </lineage>
</organism>
<accession>B5XZI5</accession>
<sequence length="286" mass="32227">MLKTVQQKLHHHTRPLLAWLKLLWRRIDEDHMTTLAGNLAYVSLLSLVPLIAVVFALFAAFPMFSEVSVQIRHFIFANFIPATGDVIQGYIEQFVANSSRMTAVGAFGLIVTSLLLMYSIDSALNTIWRSTRSRPKVYSFAVYWMILTLGPLLAGASLAISSYLLSLRWASDLDGVIDNLLRLFPLILSWAAFWLLYSIVPTTQVRNRDAVIGALVAALLFEAGKKAFALYITTFPSYQLIYGVISVVPILFVWVYWTWCIVLLGAEITVTLGEYRKLKTEETEQP</sequence>